<name>METK3_HORVU</name>
<proteinExistence type="evidence at transcript level"/>
<feature type="chain" id="PRO_0000363026" description="S-adenosylmethionine synthase 3">
    <location>
        <begin position="1"/>
        <end position="394"/>
    </location>
</feature>
<feature type="binding site" evidence="3">
    <location>
        <position position="11"/>
    </location>
    <ligand>
        <name>Mg(2+)</name>
        <dbReference type="ChEBI" id="CHEBI:18420"/>
    </ligand>
</feature>
<feature type="binding site" description="in other chain" evidence="4">
    <location>
        <position position="17"/>
    </location>
    <ligand>
        <name>ATP</name>
        <dbReference type="ChEBI" id="CHEBI:30616"/>
        <note>ligand shared between two neighboring subunits</note>
    </ligand>
</feature>
<feature type="binding site" evidence="2">
    <location>
        <position position="45"/>
    </location>
    <ligand>
        <name>K(+)</name>
        <dbReference type="ChEBI" id="CHEBI:29103"/>
    </ligand>
</feature>
<feature type="binding site" description="in other chain" evidence="2">
    <location>
        <position position="58"/>
    </location>
    <ligand>
        <name>L-methionine</name>
        <dbReference type="ChEBI" id="CHEBI:57844"/>
        <note>ligand shared between two neighboring subunits</note>
    </ligand>
</feature>
<feature type="binding site" description="in other chain" evidence="2">
    <location>
        <position position="101"/>
    </location>
    <ligand>
        <name>L-methionine</name>
        <dbReference type="ChEBI" id="CHEBI:57844"/>
        <note>ligand shared between two neighboring subunits</note>
    </ligand>
</feature>
<feature type="binding site" description="in other chain" evidence="4">
    <location>
        <begin position="169"/>
        <end position="171"/>
    </location>
    <ligand>
        <name>ATP</name>
        <dbReference type="ChEBI" id="CHEBI:30616"/>
        <note>ligand shared between two neighboring subunits</note>
    </ligand>
</feature>
<feature type="binding site" description="in other chain" evidence="4">
    <location>
        <begin position="237"/>
        <end position="240"/>
    </location>
    <ligand>
        <name>ATP</name>
        <dbReference type="ChEBI" id="CHEBI:30616"/>
        <note>ligand shared between two neighboring subunits</note>
    </ligand>
</feature>
<feature type="binding site" description="in other chain" evidence="4">
    <location>
        <position position="248"/>
    </location>
    <ligand>
        <name>ATP</name>
        <dbReference type="ChEBI" id="CHEBI:30616"/>
        <note>ligand shared between two neighboring subunits</note>
    </ligand>
</feature>
<feature type="binding site" evidence="2">
    <location>
        <position position="248"/>
    </location>
    <ligand>
        <name>L-methionine</name>
        <dbReference type="ChEBI" id="CHEBI:57844"/>
        <note>ligand shared between two neighboring subunits</note>
    </ligand>
</feature>
<feature type="binding site" description="in other chain" evidence="2">
    <location>
        <begin position="254"/>
        <end position="255"/>
    </location>
    <ligand>
        <name>ATP</name>
        <dbReference type="ChEBI" id="CHEBI:30616"/>
        <note>ligand shared between two neighboring subunits</note>
    </ligand>
</feature>
<feature type="binding site" evidence="2">
    <location>
        <position position="271"/>
    </location>
    <ligand>
        <name>ATP</name>
        <dbReference type="ChEBI" id="CHEBI:30616"/>
        <note>ligand shared between two neighboring subunits</note>
    </ligand>
</feature>
<feature type="binding site" evidence="2">
    <location>
        <position position="275"/>
    </location>
    <ligand>
        <name>ATP</name>
        <dbReference type="ChEBI" id="CHEBI:30616"/>
        <note>ligand shared between two neighboring subunits</note>
    </ligand>
</feature>
<feature type="binding site" evidence="3">
    <location>
        <position position="279"/>
    </location>
    <ligand>
        <name>ATP</name>
        <dbReference type="ChEBI" id="CHEBI:30616"/>
        <note>ligand shared between two neighboring subunits</note>
    </ligand>
</feature>
<feature type="binding site" description="in other chain" evidence="2">
    <location>
        <position position="279"/>
    </location>
    <ligand>
        <name>L-methionine</name>
        <dbReference type="ChEBI" id="CHEBI:57844"/>
        <note>ligand shared between two neighboring subunits</note>
    </ligand>
</feature>
<comment type="function">
    <text evidence="5">Catalyzes the formation of S-adenosylmethionine from methionine and ATP. The reaction comprises two steps that are both catalyzed by the same enzyme: formation of S-adenosylmethionine (AdoMet) and triphosphate, and subsequent hydrolysis of the triphosphate.</text>
</comment>
<comment type="catalytic activity">
    <reaction evidence="5">
        <text>L-methionine + ATP + H2O = S-adenosyl-L-methionine + phosphate + diphosphate</text>
        <dbReference type="Rhea" id="RHEA:21080"/>
        <dbReference type="ChEBI" id="CHEBI:15377"/>
        <dbReference type="ChEBI" id="CHEBI:30616"/>
        <dbReference type="ChEBI" id="CHEBI:33019"/>
        <dbReference type="ChEBI" id="CHEBI:43474"/>
        <dbReference type="ChEBI" id="CHEBI:57844"/>
        <dbReference type="ChEBI" id="CHEBI:59789"/>
        <dbReference type="EC" id="2.5.1.6"/>
    </reaction>
</comment>
<comment type="cofactor">
    <cofactor evidence="5">
        <name>Mn(2+)</name>
        <dbReference type="ChEBI" id="CHEBI:29035"/>
    </cofactor>
    <cofactor evidence="5">
        <name>Mg(2+)</name>
        <dbReference type="ChEBI" id="CHEBI:18420"/>
    </cofactor>
    <cofactor evidence="5">
        <name>Co(2+)</name>
        <dbReference type="ChEBI" id="CHEBI:48828"/>
    </cofactor>
    <text evidence="3 5">Binds 2 divalent ions per subunit. The metal ions interact primarily with the substrate (By similarity). Can utilize magnesium, manganese or cobalt (in vitro) (By similarity).</text>
</comment>
<comment type="cofactor">
    <cofactor evidence="5">
        <name>K(+)</name>
        <dbReference type="ChEBI" id="CHEBI:29103"/>
    </cofactor>
    <text evidence="3">Binds 1 potassium ion per subunit. The potassium ion interacts primarily with the substrate (By similarity).</text>
</comment>
<comment type="pathway">
    <text evidence="5">Amino-acid biosynthesis; S-adenosyl-L-methionine biosynthesis; S-adenosyl-L-methionine from L-methionine: step 1/1.</text>
</comment>
<comment type="subunit">
    <text evidence="1">Homotetramer.</text>
</comment>
<comment type="subcellular location">
    <subcellularLocation>
        <location evidence="1">Cytoplasm</location>
    </subcellularLocation>
</comment>
<comment type="similarity">
    <text evidence="6">Belongs to the AdoMet synthase family.</text>
</comment>
<organism>
    <name type="scientific">Hordeum vulgare</name>
    <name type="common">Barley</name>
    <dbReference type="NCBI Taxonomy" id="4513"/>
    <lineage>
        <taxon>Eukaryota</taxon>
        <taxon>Viridiplantae</taxon>
        <taxon>Streptophyta</taxon>
        <taxon>Embryophyta</taxon>
        <taxon>Tracheophyta</taxon>
        <taxon>Spermatophyta</taxon>
        <taxon>Magnoliopsida</taxon>
        <taxon>Liliopsida</taxon>
        <taxon>Poales</taxon>
        <taxon>Poaceae</taxon>
        <taxon>BOP clade</taxon>
        <taxon>Pooideae</taxon>
        <taxon>Triticodae</taxon>
        <taxon>Triticeae</taxon>
        <taxon>Hordeinae</taxon>
        <taxon>Hordeum</taxon>
    </lineage>
</organism>
<accession>Q4LB22</accession>
<sequence length="394" mass="42766">MAAETFLFTSESVNEGHPDKLCDQVSDAVLDACLAQDADSKVACETVTKTNMVMVLGEITTKATVDYEKIVRDTCRNIGFISDDVGLDADRCKVLVNIEQQSPDIAQGVHGHFTKRPEEVGAGDQGIMFGYATDETPELMPLSHVLATKLGARLTEVRKNGTCAWVRPDGKTQVTVEYLNEDGAMVPVRVHTVLISTQHDETVTNDEIAADLKEHVIKPVIPAKYLDENTIFHLNPSGRFVIGGPHGDAGLTGRKIIIDTYGGWGAHGGGAFSGKDPTKVDRSGAYIARQAAKSIIASGLARRCIVQISYAIGVPEPLSVFVDSYGTGKIPDREILKLVKENFDFRPGMISINLDLKKGGNRFIKTAAYGHFGRDDADFTWEVVKPLKFDKASA</sequence>
<protein>
    <recommendedName>
        <fullName>S-adenosylmethionine synthase 3</fullName>
        <shortName>AdoMet synthase 3</shortName>
        <ecNumber evidence="5">2.5.1.6</ecNumber>
    </recommendedName>
    <alternativeName>
        <fullName>Methionine adenosyltransferase 3</fullName>
        <shortName>MAT 3</shortName>
    </alternativeName>
</protein>
<dbReference type="EC" id="2.5.1.6" evidence="5"/>
<dbReference type="EMBL" id="AM039895">
    <property type="protein sequence ID" value="CAJ01704.1"/>
    <property type="molecule type" value="mRNA"/>
</dbReference>
<dbReference type="SMR" id="Q4LB22"/>
<dbReference type="UniPathway" id="UPA00315">
    <property type="reaction ID" value="UER00080"/>
</dbReference>
<dbReference type="ExpressionAtlas" id="Q4LB22">
    <property type="expression patterns" value="baseline and differential"/>
</dbReference>
<dbReference type="GO" id="GO:0005737">
    <property type="term" value="C:cytoplasm"/>
    <property type="evidence" value="ECO:0007669"/>
    <property type="project" value="UniProtKB-SubCell"/>
</dbReference>
<dbReference type="GO" id="GO:0005524">
    <property type="term" value="F:ATP binding"/>
    <property type="evidence" value="ECO:0007669"/>
    <property type="project" value="UniProtKB-KW"/>
</dbReference>
<dbReference type="GO" id="GO:0046872">
    <property type="term" value="F:metal ion binding"/>
    <property type="evidence" value="ECO:0007669"/>
    <property type="project" value="UniProtKB-KW"/>
</dbReference>
<dbReference type="GO" id="GO:0004478">
    <property type="term" value="F:methionine adenosyltransferase activity"/>
    <property type="evidence" value="ECO:0007669"/>
    <property type="project" value="UniProtKB-EC"/>
</dbReference>
<dbReference type="GO" id="GO:0006730">
    <property type="term" value="P:one-carbon metabolic process"/>
    <property type="evidence" value="ECO:0007669"/>
    <property type="project" value="UniProtKB-KW"/>
</dbReference>
<dbReference type="GO" id="GO:0006556">
    <property type="term" value="P:S-adenosylmethionine biosynthetic process"/>
    <property type="evidence" value="ECO:0007669"/>
    <property type="project" value="UniProtKB-UniPathway"/>
</dbReference>
<dbReference type="CDD" id="cd18079">
    <property type="entry name" value="S-AdoMet_synt"/>
    <property type="match status" value="1"/>
</dbReference>
<dbReference type="FunFam" id="3.30.300.10:FF:000001">
    <property type="entry name" value="S-adenosylmethionine synthase"/>
    <property type="match status" value="1"/>
</dbReference>
<dbReference type="FunFam" id="3.30.300.10:FF:000003">
    <property type="entry name" value="S-adenosylmethionine synthase"/>
    <property type="match status" value="1"/>
</dbReference>
<dbReference type="FunFam" id="3.30.300.10:FF:000004">
    <property type="entry name" value="S-adenosylmethionine synthase"/>
    <property type="match status" value="1"/>
</dbReference>
<dbReference type="Gene3D" id="3.30.300.10">
    <property type="match status" value="3"/>
</dbReference>
<dbReference type="HAMAP" id="MF_00086">
    <property type="entry name" value="S_AdoMet_synth1"/>
    <property type="match status" value="1"/>
</dbReference>
<dbReference type="InterPro" id="IPR022631">
    <property type="entry name" value="ADOMET_SYNTHASE_CS"/>
</dbReference>
<dbReference type="InterPro" id="IPR022630">
    <property type="entry name" value="S-AdoMet_synt_C"/>
</dbReference>
<dbReference type="InterPro" id="IPR022629">
    <property type="entry name" value="S-AdoMet_synt_central"/>
</dbReference>
<dbReference type="InterPro" id="IPR022628">
    <property type="entry name" value="S-AdoMet_synt_N"/>
</dbReference>
<dbReference type="InterPro" id="IPR002133">
    <property type="entry name" value="S-AdoMet_synthetase"/>
</dbReference>
<dbReference type="InterPro" id="IPR022636">
    <property type="entry name" value="S-AdoMet_synthetase_sfam"/>
</dbReference>
<dbReference type="NCBIfam" id="TIGR01034">
    <property type="entry name" value="metK"/>
    <property type="match status" value="1"/>
</dbReference>
<dbReference type="PANTHER" id="PTHR11964">
    <property type="entry name" value="S-ADENOSYLMETHIONINE SYNTHETASE"/>
    <property type="match status" value="1"/>
</dbReference>
<dbReference type="Pfam" id="PF02773">
    <property type="entry name" value="S-AdoMet_synt_C"/>
    <property type="match status" value="1"/>
</dbReference>
<dbReference type="Pfam" id="PF02772">
    <property type="entry name" value="S-AdoMet_synt_M"/>
    <property type="match status" value="1"/>
</dbReference>
<dbReference type="Pfam" id="PF00438">
    <property type="entry name" value="S-AdoMet_synt_N"/>
    <property type="match status" value="1"/>
</dbReference>
<dbReference type="PIRSF" id="PIRSF000497">
    <property type="entry name" value="MAT"/>
    <property type="match status" value="1"/>
</dbReference>
<dbReference type="SUPFAM" id="SSF55973">
    <property type="entry name" value="S-adenosylmethionine synthetase"/>
    <property type="match status" value="3"/>
</dbReference>
<dbReference type="PROSITE" id="PS00376">
    <property type="entry name" value="ADOMET_SYNTHASE_1"/>
    <property type="match status" value="1"/>
</dbReference>
<dbReference type="PROSITE" id="PS00377">
    <property type="entry name" value="ADOMET_SYNTHASE_2"/>
    <property type="match status" value="1"/>
</dbReference>
<evidence type="ECO:0000250" key="1"/>
<evidence type="ECO:0000250" key="2">
    <source>
        <dbReference type="UniProtKB" id="P0A817"/>
    </source>
</evidence>
<evidence type="ECO:0000250" key="3">
    <source>
        <dbReference type="UniProtKB" id="P13444"/>
    </source>
</evidence>
<evidence type="ECO:0000250" key="4">
    <source>
        <dbReference type="UniProtKB" id="Q00266"/>
    </source>
</evidence>
<evidence type="ECO:0000250" key="5">
    <source>
        <dbReference type="UniProtKB" id="Q96551"/>
    </source>
</evidence>
<evidence type="ECO:0000305" key="6"/>
<reference key="1">
    <citation type="journal article" date="2005" name="Plant Mol. Biol.">
        <title>The methylation cycle and its possible functions in barley endosperm development.</title>
        <authorList>
            <person name="Radchuk V.V."/>
            <person name="Sreenivasulu N."/>
            <person name="Radchuk R.I."/>
            <person name="Wobus U."/>
            <person name="Weschke W."/>
        </authorList>
    </citation>
    <scope>NUCLEOTIDE SEQUENCE [MRNA]</scope>
    <source>
        <strain>cv. Barke</strain>
        <tissue>Seed</tissue>
    </source>
</reference>
<gene>
    <name type="primary">SAM3</name>
</gene>
<keyword id="KW-0067">ATP-binding</keyword>
<keyword id="KW-0170">Cobalt</keyword>
<keyword id="KW-0963">Cytoplasm</keyword>
<keyword id="KW-0460">Magnesium</keyword>
<keyword id="KW-0479">Metal-binding</keyword>
<keyword id="KW-0547">Nucleotide-binding</keyword>
<keyword id="KW-0554">One-carbon metabolism</keyword>
<keyword id="KW-0630">Potassium</keyword>
<keyword id="KW-0808">Transferase</keyword>